<keyword id="KW-0378">Hydrolase</keyword>
<keyword id="KW-1185">Reference proteome</keyword>
<evidence type="ECO:0000255" key="1">
    <source>
        <dbReference type="PROSITE-ProRule" id="PRU00520"/>
    </source>
</evidence>
<evidence type="ECO:0000305" key="2"/>
<proteinExistence type="inferred from homology"/>
<comment type="catalytic activity">
    <reaction>
        <text>an acyl phosphate + H2O = a carboxylate + phosphate + H(+)</text>
        <dbReference type="Rhea" id="RHEA:14965"/>
        <dbReference type="ChEBI" id="CHEBI:15377"/>
        <dbReference type="ChEBI" id="CHEBI:15378"/>
        <dbReference type="ChEBI" id="CHEBI:29067"/>
        <dbReference type="ChEBI" id="CHEBI:43474"/>
        <dbReference type="ChEBI" id="CHEBI:59918"/>
        <dbReference type="EC" id="3.6.1.7"/>
    </reaction>
</comment>
<comment type="similarity">
    <text evidence="2">Belongs to the acylphosphatase family.</text>
</comment>
<gene>
    <name type="primary">acyP</name>
    <name type="ordered locus">LA_3975</name>
</gene>
<organism>
    <name type="scientific">Leptospira interrogans serogroup Icterohaemorrhagiae serovar Lai (strain 56601)</name>
    <dbReference type="NCBI Taxonomy" id="189518"/>
    <lineage>
        <taxon>Bacteria</taxon>
        <taxon>Pseudomonadati</taxon>
        <taxon>Spirochaetota</taxon>
        <taxon>Spirochaetia</taxon>
        <taxon>Leptospirales</taxon>
        <taxon>Leptospiraceae</taxon>
        <taxon>Leptospira</taxon>
    </lineage>
</organism>
<feature type="chain" id="PRO_0000326736" description="Acylphosphatase">
    <location>
        <begin position="1"/>
        <end position="95"/>
    </location>
</feature>
<feature type="domain" description="Acylphosphatase-like" evidence="1">
    <location>
        <begin position="8"/>
        <end position="95"/>
    </location>
</feature>
<feature type="active site" evidence="1">
    <location>
        <position position="23"/>
    </location>
</feature>
<feature type="active site" evidence="1">
    <location>
        <position position="41"/>
    </location>
</feature>
<accession>Q8EZ81</accession>
<reference key="1">
    <citation type="journal article" date="2003" name="Nature">
        <title>Unique physiological and pathogenic features of Leptospira interrogans revealed by whole-genome sequencing.</title>
        <authorList>
            <person name="Ren S.-X."/>
            <person name="Fu G."/>
            <person name="Jiang X.-G."/>
            <person name="Zeng R."/>
            <person name="Miao Y.-G."/>
            <person name="Xu H."/>
            <person name="Zhang Y.-X."/>
            <person name="Xiong H."/>
            <person name="Lu G."/>
            <person name="Lu L.-F."/>
            <person name="Jiang H.-Q."/>
            <person name="Jia J."/>
            <person name="Tu Y.-F."/>
            <person name="Jiang J.-X."/>
            <person name="Gu W.-Y."/>
            <person name="Zhang Y.-Q."/>
            <person name="Cai Z."/>
            <person name="Sheng H.-H."/>
            <person name="Yin H.-F."/>
            <person name="Zhang Y."/>
            <person name="Zhu G.-F."/>
            <person name="Wan M."/>
            <person name="Huang H.-L."/>
            <person name="Qian Z."/>
            <person name="Wang S.-Y."/>
            <person name="Ma W."/>
            <person name="Yao Z.-J."/>
            <person name="Shen Y."/>
            <person name="Qiang B.-Q."/>
            <person name="Xia Q.-C."/>
            <person name="Guo X.-K."/>
            <person name="Danchin A."/>
            <person name="Saint Girons I."/>
            <person name="Somerville R.L."/>
            <person name="Wen Y.-M."/>
            <person name="Shi M.-H."/>
            <person name="Chen Z."/>
            <person name="Xu J.-G."/>
            <person name="Zhao G.-P."/>
        </authorList>
    </citation>
    <scope>NUCLEOTIDE SEQUENCE [LARGE SCALE GENOMIC DNA]</scope>
    <source>
        <strain>56601</strain>
    </source>
</reference>
<sequence>MGSKNNSRAKILVRGKVQGVGFRYYILQRAQECRLSGYTQNLPGGEVETVVEGDKMFIEDLYRAIQRGPKGSEVKEALITWEDPKGNFRTFEIKK</sequence>
<protein>
    <recommendedName>
        <fullName>Acylphosphatase</fullName>
        <ecNumber>3.6.1.7</ecNumber>
    </recommendedName>
    <alternativeName>
        <fullName>Acylphosphate phosphohydrolase</fullName>
    </alternativeName>
</protein>
<name>ACYP_LEPIN</name>
<dbReference type="EC" id="3.6.1.7"/>
<dbReference type="EMBL" id="AE010300">
    <property type="protein sequence ID" value="AAN51173.1"/>
    <property type="molecule type" value="Genomic_DNA"/>
</dbReference>
<dbReference type="RefSeq" id="NP_714155.1">
    <property type="nucleotide sequence ID" value="NC_004342.2"/>
</dbReference>
<dbReference type="RefSeq" id="WP_000534971.1">
    <property type="nucleotide sequence ID" value="NC_004342.2"/>
</dbReference>
<dbReference type="SMR" id="Q8EZ81"/>
<dbReference type="FunCoup" id="Q8EZ81">
    <property type="interactions" value="248"/>
</dbReference>
<dbReference type="STRING" id="189518.LA_3975"/>
<dbReference type="PaxDb" id="189518-LA_3975"/>
<dbReference type="EnsemblBacteria" id="AAN51173">
    <property type="protein sequence ID" value="AAN51173"/>
    <property type="gene ID" value="LA_3975"/>
</dbReference>
<dbReference type="KEGG" id="lil:LA_3975"/>
<dbReference type="PATRIC" id="fig|189518.3.peg.3945"/>
<dbReference type="HOGENOM" id="CLU_141932_2_1_12"/>
<dbReference type="InParanoid" id="Q8EZ81"/>
<dbReference type="OrthoDB" id="9808093at2"/>
<dbReference type="PRO" id="PR:Q8EZ81"/>
<dbReference type="Proteomes" id="UP000001408">
    <property type="component" value="Chromosome I"/>
</dbReference>
<dbReference type="GO" id="GO:0003998">
    <property type="term" value="F:acylphosphatase activity"/>
    <property type="evidence" value="ECO:0007669"/>
    <property type="project" value="UniProtKB-EC"/>
</dbReference>
<dbReference type="Gene3D" id="3.30.70.100">
    <property type="match status" value="1"/>
</dbReference>
<dbReference type="InterPro" id="IPR020456">
    <property type="entry name" value="Acylphosphatase"/>
</dbReference>
<dbReference type="InterPro" id="IPR001792">
    <property type="entry name" value="Acylphosphatase-like_dom"/>
</dbReference>
<dbReference type="InterPro" id="IPR036046">
    <property type="entry name" value="Acylphosphatase-like_dom_sf"/>
</dbReference>
<dbReference type="InterPro" id="IPR017968">
    <property type="entry name" value="Acylphosphatase_CS"/>
</dbReference>
<dbReference type="PANTHER" id="PTHR47268">
    <property type="entry name" value="ACYLPHOSPHATASE"/>
    <property type="match status" value="1"/>
</dbReference>
<dbReference type="PANTHER" id="PTHR47268:SF4">
    <property type="entry name" value="ACYLPHOSPHATASE"/>
    <property type="match status" value="1"/>
</dbReference>
<dbReference type="Pfam" id="PF00708">
    <property type="entry name" value="Acylphosphatase"/>
    <property type="match status" value="1"/>
</dbReference>
<dbReference type="SUPFAM" id="SSF54975">
    <property type="entry name" value="Acylphosphatase/BLUF domain-like"/>
    <property type="match status" value="1"/>
</dbReference>
<dbReference type="PROSITE" id="PS00150">
    <property type="entry name" value="ACYLPHOSPHATASE_1"/>
    <property type="match status" value="1"/>
</dbReference>
<dbReference type="PROSITE" id="PS51160">
    <property type="entry name" value="ACYLPHOSPHATASE_3"/>
    <property type="match status" value="1"/>
</dbReference>